<feature type="chain" id="PRO_1000007613" description="Large ribosomal subunit protein uL29">
    <location>
        <begin position="1"/>
        <end position="67"/>
    </location>
</feature>
<protein>
    <recommendedName>
        <fullName evidence="1">Large ribosomal subunit protein uL29</fullName>
    </recommendedName>
    <alternativeName>
        <fullName evidence="2">50S ribosomal protein L29</fullName>
    </alternativeName>
</protein>
<sequence length="67" mass="8165">MKAQNVRDLDEHELKTKLKEMDEQMFRLHFQMSMGQMDGLKKVRQMRKDRARMNTILRERELAGEKK</sequence>
<name>RL29_SOLUE</name>
<reference key="1">
    <citation type="journal article" date="2009" name="Appl. Environ. Microbiol.">
        <title>Three genomes from the phylum Acidobacteria provide insight into the lifestyles of these microorganisms in soils.</title>
        <authorList>
            <person name="Ward N.L."/>
            <person name="Challacombe J.F."/>
            <person name="Janssen P.H."/>
            <person name="Henrissat B."/>
            <person name="Coutinho P.M."/>
            <person name="Wu M."/>
            <person name="Xie G."/>
            <person name="Haft D.H."/>
            <person name="Sait M."/>
            <person name="Badger J."/>
            <person name="Barabote R.D."/>
            <person name="Bradley B."/>
            <person name="Brettin T.S."/>
            <person name="Brinkac L.M."/>
            <person name="Bruce D."/>
            <person name="Creasy T."/>
            <person name="Daugherty S.C."/>
            <person name="Davidsen T.M."/>
            <person name="DeBoy R.T."/>
            <person name="Detter J.C."/>
            <person name="Dodson R.J."/>
            <person name="Durkin A.S."/>
            <person name="Ganapathy A."/>
            <person name="Gwinn-Giglio M."/>
            <person name="Han C.S."/>
            <person name="Khouri H."/>
            <person name="Kiss H."/>
            <person name="Kothari S.P."/>
            <person name="Madupu R."/>
            <person name="Nelson K.E."/>
            <person name="Nelson W.C."/>
            <person name="Paulsen I."/>
            <person name="Penn K."/>
            <person name="Ren Q."/>
            <person name="Rosovitz M.J."/>
            <person name="Selengut J.D."/>
            <person name="Shrivastava S."/>
            <person name="Sullivan S.A."/>
            <person name="Tapia R."/>
            <person name="Thompson L.S."/>
            <person name="Watkins K.L."/>
            <person name="Yang Q."/>
            <person name="Yu C."/>
            <person name="Zafar N."/>
            <person name="Zhou L."/>
            <person name="Kuske C.R."/>
        </authorList>
    </citation>
    <scope>NUCLEOTIDE SEQUENCE [LARGE SCALE GENOMIC DNA]</scope>
    <source>
        <strain>Ellin6076</strain>
    </source>
</reference>
<comment type="similarity">
    <text evidence="1">Belongs to the universal ribosomal protein uL29 family.</text>
</comment>
<organism>
    <name type="scientific">Solibacter usitatus (strain Ellin6076)</name>
    <dbReference type="NCBI Taxonomy" id="234267"/>
    <lineage>
        <taxon>Bacteria</taxon>
        <taxon>Pseudomonadati</taxon>
        <taxon>Acidobacteriota</taxon>
        <taxon>Terriglobia</taxon>
        <taxon>Bryobacterales</taxon>
        <taxon>Solibacteraceae</taxon>
        <taxon>Candidatus Solibacter</taxon>
    </lineage>
</organism>
<gene>
    <name evidence="1" type="primary">rpmC</name>
    <name type="ordered locus">Acid_5110</name>
</gene>
<accession>Q01WA0</accession>
<keyword id="KW-0687">Ribonucleoprotein</keyword>
<keyword id="KW-0689">Ribosomal protein</keyword>
<proteinExistence type="inferred from homology"/>
<evidence type="ECO:0000255" key="1">
    <source>
        <dbReference type="HAMAP-Rule" id="MF_00374"/>
    </source>
</evidence>
<evidence type="ECO:0000305" key="2"/>
<dbReference type="EMBL" id="CP000473">
    <property type="protein sequence ID" value="ABJ86065.1"/>
    <property type="molecule type" value="Genomic_DNA"/>
</dbReference>
<dbReference type="SMR" id="Q01WA0"/>
<dbReference type="FunCoup" id="Q01WA0">
    <property type="interactions" value="444"/>
</dbReference>
<dbReference type="STRING" id="234267.Acid_5110"/>
<dbReference type="KEGG" id="sus:Acid_5110"/>
<dbReference type="eggNOG" id="COG0255">
    <property type="taxonomic scope" value="Bacteria"/>
</dbReference>
<dbReference type="HOGENOM" id="CLU_158491_3_1_0"/>
<dbReference type="InParanoid" id="Q01WA0"/>
<dbReference type="OrthoDB" id="9815192at2"/>
<dbReference type="GO" id="GO:1990904">
    <property type="term" value="C:ribonucleoprotein complex"/>
    <property type="evidence" value="ECO:0007669"/>
    <property type="project" value="UniProtKB-KW"/>
</dbReference>
<dbReference type="GO" id="GO:0005840">
    <property type="term" value="C:ribosome"/>
    <property type="evidence" value="ECO:0007669"/>
    <property type="project" value="UniProtKB-KW"/>
</dbReference>
<dbReference type="GO" id="GO:0003735">
    <property type="term" value="F:structural constituent of ribosome"/>
    <property type="evidence" value="ECO:0007669"/>
    <property type="project" value="InterPro"/>
</dbReference>
<dbReference type="GO" id="GO:0006412">
    <property type="term" value="P:translation"/>
    <property type="evidence" value="ECO:0007669"/>
    <property type="project" value="UniProtKB-UniRule"/>
</dbReference>
<dbReference type="Gene3D" id="1.10.287.310">
    <property type="match status" value="1"/>
</dbReference>
<dbReference type="HAMAP" id="MF_00374">
    <property type="entry name" value="Ribosomal_uL29"/>
    <property type="match status" value="1"/>
</dbReference>
<dbReference type="InterPro" id="IPR001854">
    <property type="entry name" value="Ribosomal_uL29"/>
</dbReference>
<dbReference type="InterPro" id="IPR036049">
    <property type="entry name" value="Ribosomal_uL29_sf"/>
</dbReference>
<dbReference type="NCBIfam" id="TIGR00012">
    <property type="entry name" value="L29"/>
    <property type="match status" value="1"/>
</dbReference>
<dbReference type="Pfam" id="PF00831">
    <property type="entry name" value="Ribosomal_L29"/>
    <property type="match status" value="1"/>
</dbReference>
<dbReference type="SUPFAM" id="SSF46561">
    <property type="entry name" value="Ribosomal protein L29 (L29p)"/>
    <property type="match status" value="1"/>
</dbReference>